<keyword id="KW-0963">Cytoplasm</keyword>
<keyword id="KW-0448">Lipopolysaccharide biosynthesis</keyword>
<keyword id="KW-0548">Nucleotidyltransferase</keyword>
<keyword id="KW-1185">Reference proteome</keyword>
<keyword id="KW-0808">Transferase</keyword>
<gene>
    <name evidence="1" type="primary">kdsB</name>
    <name type="ordered locus">Noc_2840</name>
</gene>
<name>KDSB_NITOC</name>
<proteinExistence type="inferred from homology"/>
<protein>
    <recommendedName>
        <fullName evidence="1">3-deoxy-manno-octulosonate cytidylyltransferase</fullName>
        <ecNumber evidence="1">2.7.7.38</ecNumber>
    </recommendedName>
    <alternativeName>
        <fullName evidence="1">CMP-2-keto-3-deoxyoctulosonic acid synthase</fullName>
        <shortName evidence="1">CKS</shortName>
        <shortName evidence="1">CMP-KDO synthase</shortName>
    </alternativeName>
</protein>
<feature type="chain" id="PRO_0000370109" description="3-deoxy-manno-octulosonate cytidylyltransferase">
    <location>
        <begin position="1"/>
        <end position="259"/>
    </location>
</feature>
<sequence length="259" mass="28988">MSYKVIIPARYGASRLPGKPLLDLAGKPMLLHVVEKAQKSGAEEVLVATDDRRIEAIVQNHGVQVCMTSVQHDSGTNRLAEAVTQKDYPDQTIIINVQGDEPLLPPSLITQAAEDLKTHPKADIATLCVPIANREELFDPNIVKVVRDIQGYALYFSRAPIPWAREDFAAKTGNRWPTSWSYYRHVGLYAYRASFLRRYPQLPVSPLEQAECLEQLRVLYHGGRIHVAIAGTIPPPGVDTLADLERVRQLLVTQERNHN</sequence>
<accession>Q3J7B0</accession>
<evidence type="ECO:0000255" key="1">
    <source>
        <dbReference type="HAMAP-Rule" id="MF_00057"/>
    </source>
</evidence>
<organism>
    <name type="scientific">Nitrosococcus oceani (strain ATCC 19707 / BCRC 17464 / JCM 30415 / NCIMB 11848 / C-107)</name>
    <dbReference type="NCBI Taxonomy" id="323261"/>
    <lineage>
        <taxon>Bacteria</taxon>
        <taxon>Pseudomonadati</taxon>
        <taxon>Pseudomonadota</taxon>
        <taxon>Gammaproteobacteria</taxon>
        <taxon>Chromatiales</taxon>
        <taxon>Chromatiaceae</taxon>
        <taxon>Nitrosococcus</taxon>
    </lineage>
</organism>
<comment type="function">
    <text evidence="1">Activates KDO (a required 8-carbon sugar) for incorporation into bacterial lipopolysaccharide in Gram-negative bacteria.</text>
</comment>
<comment type="catalytic activity">
    <reaction evidence="1">
        <text>3-deoxy-alpha-D-manno-oct-2-ulosonate + CTP = CMP-3-deoxy-beta-D-manno-octulosonate + diphosphate</text>
        <dbReference type="Rhea" id="RHEA:23448"/>
        <dbReference type="ChEBI" id="CHEBI:33019"/>
        <dbReference type="ChEBI" id="CHEBI:37563"/>
        <dbReference type="ChEBI" id="CHEBI:85986"/>
        <dbReference type="ChEBI" id="CHEBI:85987"/>
        <dbReference type="EC" id="2.7.7.38"/>
    </reaction>
</comment>
<comment type="pathway">
    <text evidence="1">Nucleotide-sugar biosynthesis; CMP-3-deoxy-D-manno-octulosonate biosynthesis; CMP-3-deoxy-D-manno-octulosonate from 3-deoxy-D-manno-octulosonate and CTP: step 1/1.</text>
</comment>
<comment type="pathway">
    <text evidence="1">Bacterial outer membrane biogenesis; lipopolysaccharide biosynthesis.</text>
</comment>
<comment type="subcellular location">
    <subcellularLocation>
        <location evidence="1">Cytoplasm</location>
    </subcellularLocation>
</comment>
<comment type="similarity">
    <text evidence="1">Belongs to the KdsB family.</text>
</comment>
<dbReference type="EC" id="2.7.7.38" evidence="1"/>
<dbReference type="EMBL" id="CP000127">
    <property type="protein sequence ID" value="ABA59286.1"/>
    <property type="molecule type" value="Genomic_DNA"/>
</dbReference>
<dbReference type="RefSeq" id="WP_011331074.1">
    <property type="nucleotide sequence ID" value="NC_007484.1"/>
</dbReference>
<dbReference type="SMR" id="Q3J7B0"/>
<dbReference type="FunCoup" id="Q3J7B0">
    <property type="interactions" value="444"/>
</dbReference>
<dbReference type="STRING" id="323261.Noc_2840"/>
<dbReference type="KEGG" id="noc:Noc_2840"/>
<dbReference type="eggNOG" id="COG1212">
    <property type="taxonomic scope" value="Bacteria"/>
</dbReference>
<dbReference type="HOGENOM" id="CLU_065038_1_0_6"/>
<dbReference type="InParanoid" id="Q3J7B0"/>
<dbReference type="UniPathway" id="UPA00030"/>
<dbReference type="UniPathway" id="UPA00358">
    <property type="reaction ID" value="UER00476"/>
</dbReference>
<dbReference type="Proteomes" id="UP000006838">
    <property type="component" value="Chromosome"/>
</dbReference>
<dbReference type="GO" id="GO:0005829">
    <property type="term" value="C:cytosol"/>
    <property type="evidence" value="ECO:0007669"/>
    <property type="project" value="TreeGrafter"/>
</dbReference>
<dbReference type="GO" id="GO:0008690">
    <property type="term" value="F:3-deoxy-manno-octulosonate cytidylyltransferase activity"/>
    <property type="evidence" value="ECO:0007669"/>
    <property type="project" value="UniProtKB-UniRule"/>
</dbReference>
<dbReference type="GO" id="GO:0033468">
    <property type="term" value="P:CMP-keto-3-deoxy-D-manno-octulosonic acid biosynthetic process"/>
    <property type="evidence" value="ECO:0007669"/>
    <property type="project" value="UniProtKB-UniRule"/>
</dbReference>
<dbReference type="GO" id="GO:0009103">
    <property type="term" value="P:lipopolysaccharide biosynthetic process"/>
    <property type="evidence" value="ECO:0007669"/>
    <property type="project" value="UniProtKB-UniRule"/>
</dbReference>
<dbReference type="CDD" id="cd02517">
    <property type="entry name" value="CMP-KDO-Synthetase"/>
    <property type="match status" value="1"/>
</dbReference>
<dbReference type="FunFam" id="3.90.550.10:FF:000011">
    <property type="entry name" value="3-deoxy-manno-octulosonate cytidylyltransferase"/>
    <property type="match status" value="1"/>
</dbReference>
<dbReference type="Gene3D" id="3.90.550.10">
    <property type="entry name" value="Spore Coat Polysaccharide Biosynthesis Protein SpsA, Chain A"/>
    <property type="match status" value="1"/>
</dbReference>
<dbReference type="HAMAP" id="MF_00057">
    <property type="entry name" value="KdsB"/>
    <property type="match status" value="1"/>
</dbReference>
<dbReference type="InterPro" id="IPR003329">
    <property type="entry name" value="Cytidylyl_trans"/>
</dbReference>
<dbReference type="InterPro" id="IPR004528">
    <property type="entry name" value="KdsB"/>
</dbReference>
<dbReference type="InterPro" id="IPR029044">
    <property type="entry name" value="Nucleotide-diphossugar_trans"/>
</dbReference>
<dbReference type="NCBIfam" id="TIGR00466">
    <property type="entry name" value="kdsB"/>
    <property type="match status" value="1"/>
</dbReference>
<dbReference type="NCBIfam" id="NF003950">
    <property type="entry name" value="PRK05450.1-3"/>
    <property type="match status" value="1"/>
</dbReference>
<dbReference type="NCBIfam" id="NF003952">
    <property type="entry name" value="PRK05450.1-5"/>
    <property type="match status" value="1"/>
</dbReference>
<dbReference type="NCBIfam" id="NF009905">
    <property type="entry name" value="PRK13368.1"/>
    <property type="match status" value="1"/>
</dbReference>
<dbReference type="PANTHER" id="PTHR42866">
    <property type="entry name" value="3-DEOXY-MANNO-OCTULOSONATE CYTIDYLYLTRANSFERASE"/>
    <property type="match status" value="1"/>
</dbReference>
<dbReference type="PANTHER" id="PTHR42866:SF2">
    <property type="entry name" value="3-DEOXY-MANNO-OCTULOSONATE CYTIDYLYLTRANSFERASE, MITOCHONDRIAL"/>
    <property type="match status" value="1"/>
</dbReference>
<dbReference type="Pfam" id="PF02348">
    <property type="entry name" value="CTP_transf_3"/>
    <property type="match status" value="1"/>
</dbReference>
<dbReference type="SUPFAM" id="SSF53448">
    <property type="entry name" value="Nucleotide-diphospho-sugar transferases"/>
    <property type="match status" value="1"/>
</dbReference>
<reference key="1">
    <citation type="journal article" date="2006" name="Appl. Environ. Microbiol.">
        <title>Complete genome sequence of the marine, chemolithoautotrophic, ammonia-oxidizing bacterium Nitrosococcus oceani ATCC 19707.</title>
        <authorList>
            <person name="Klotz M.G."/>
            <person name="Arp D.J."/>
            <person name="Chain P.S.G."/>
            <person name="El-Sheikh A.F."/>
            <person name="Hauser L.J."/>
            <person name="Hommes N.G."/>
            <person name="Larimer F.W."/>
            <person name="Malfatti S.A."/>
            <person name="Norton J.M."/>
            <person name="Poret-Peterson A.T."/>
            <person name="Vergez L.M."/>
            <person name="Ward B.B."/>
        </authorList>
    </citation>
    <scope>NUCLEOTIDE SEQUENCE [LARGE SCALE GENOMIC DNA]</scope>
    <source>
        <strain>ATCC 19707 / BCRC 17464 / JCM 30415 / NCIMB 11848 / C-107</strain>
    </source>
</reference>